<protein>
    <recommendedName>
        <fullName>Uncharacterized protein MJ1554</fullName>
    </recommendedName>
</protein>
<feature type="signal peptide" evidence="1">
    <location>
        <begin position="1"/>
        <end position="20"/>
    </location>
</feature>
<feature type="chain" id="PRO_0000014017" description="Uncharacterized protein MJ1554">
    <location>
        <begin position="21"/>
        <end position="622"/>
    </location>
</feature>
<accession>Q58949</accession>
<gene>
    <name type="ordered locus">MJ1554</name>
</gene>
<reference key="1">
    <citation type="journal article" date="1996" name="Science">
        <title>Complete genome sequence of the methanogenic archaeon, Methanococcus jannaschii.</title>
        <authorList>
            <person name="Bult C.J."/>
            <person name="White O."/>
            <person name="Olsen G.J."/>
            <person name="Zhou L."/>
            <person name="Fleischmann R.D."/>
            <person name="Sutton G.G."/>
            <person name="Blake J.A."/>
            <person name="FitzGerald L.M."/>
            <person name="Clayton R.A."/>
            <person name="Gocayne J.D."/>
            <person name="Kerlavage A.R."/>
            <person name="Dougherty B.A."/>
            <person name="Tomb J.-F."/>
            <person name="Adams M.D."/>
            <person name="Reich C.I."/>
            <person name="Overbeek R."/>
            <person name="Kirkness E.F."/>
            <person name="Weinstock K.G."/>
            <person name="Merrick J.M."/>
            <person name="Glodek A."/>
            <person name="Scott J.L."/>
            <person name="Geoghagen N.S.M."/>
            <person name="Weidman J.F."/>
            <person name="Fuhrmann J.L."/>
            <person name="Nguyen D."/>
            <person name="Utterback T.R."/>
            <person name="Kelley J.M."/>
            <person name="Peterson J.D."/>
            <person name="Sadow P.W."/>
            <person name="Hanna M.C."/>
            <person name="Cotton M.D."/>
            <person name="Roberts K.M."/>
            <person name="Hurst M.A."/>
            <person name="Kaine B.P."/>
            <person name="Borodovsky M."/>
            <person name="Klenk H.-P."/>
            <person name="Fraser C.M."/>
            <person name="Smith H.O."/>
            <person name="Woese C.R."/>
            <person name="Venter J.C."/>
        </authorList>
    </citation>
    <scope>NUCLEOTIDE SEQUENCE [LARGE SCALE GENOMIC DNA]</scope>
    <source>
        <strain>ATCC 43067 / DSM 2661 / JAL-1 / JCM 10045 / NBRC 100440</strain>
    </source>
</reference>
<dbReference type="EMBL" id="L77117">
    <property type="protein sequence ID" value="AAB99574.1"/>
    <property type="molecule type" value="Genomic_DNA"/>
</dbReference>
<dbReference type="PIR" id="A64494">
    <property type="entry name" value="A64494"/>
</dbReference>
<dbReference type="RefSeq" id="WP_010871078.1">
    <property type="nucleotide sequence ID" value="NC_000909.1"/>
</dbReference>
<dbReference type="STRING" id="243232.MJ_1554"/>
<dbReference type="PaxDb" id="243232-MJ_1554"/>
<dbReference type="EnsemblBacteria" id="AAB99574">
    <property type="protein sequence ID" value="AAB99574"/>
    <property type="gene ID" value="MJ_1554"/>
</dbReference>
<dbReference type="GeneID" id="1452462"/>
<dbReference type="KEGG" id="mja:MJ_1554"/>
<dbReference type="eggNOG" id="arCOG02284">
    <property type="taxonomic scope" value="Archaea"/>
</dbReference>
<dbReference type="HOGENOM" id="CLU_015706_1_0_2"/>
<dbReference type="InParanoid" id="Q58949"/>
<dbReference type="OrthoDB" id="28968at2157"/>
<dbReference type="PhylomeDB" id="Q58949"/>
<dbReference type="Proteomes" id="UP000000805">
    <property type="component" value="Chromosome"/>
</dbReference>
<dbReference type="InterPro" id="IPR019198">
    <property type="entry name" value="Beta_propeller_containing"/>
</dbReference>
<dbReference type="InterPro" id="IPR011044">
    <property type="entry name" value="Quino_amine_DH_bsu"/>
</dbReference>
<dbReference type="InterPro" id="IPR014441">
    <property type="entry name" value="UCP006425_b-propeller"/>
</dbReference>
<dbReference type="Pfam" id="PF09826">
    <property type="entry name" value="Beta_propel"/>
    <property type="match status" value="1"/>
</dbReference>
<dbReference type="PIRSF" id="PIRSF006425">
    <property type="entry name" value="UCP006425_WD40"/>
    <property type="match status" value="1"/>
</dbReference>
<dbReference type="SUPFAM" id="SSF50969">
    <property type="entry name" value="YVTN repeat-like/Quinoprotein amine dehydrogenase"/>
    <property type="match status" value="1"/>
</dbReference>
<dbReference type="PROSITE" id="PS51257">
    <property type="entry name" value="PROKAR_LIPOPROTEIN"/>
    <property type="match status" value="1"/>
</dbReference>
<sequence length="622" mass="72283">MKIKAVAIFLSLLMIISLFSGCVENEKPIKEGSNDFKLIPVNSKSNFEEFKNTVENSIGNYIYVGHSYASREVQITSTVKSSNVETSTEPERFSKTNVQVKGVDEADILKTNGNIIAFSQNKIYLIKPLPPKYAKIIKNISECGYLYLTNNTLIVISWNKITSYNVSNPEMPKIIWQMDLNGSYVDSRLYNGTLYLVVRKNSIDCPIVWNNYKIGYDKYYIPELPPIYSMDFDTTYIISRINIKSGKVENSIAIVGNYKTTLYMSKNNLYFAYNLKINEKKLMLNFLNESADKYFPTEVADKIKRVIENEDFGDNAKFVEITETIERYLSSLPSEKRHNLMKKLQNDFENYLEEHWEEFEYTGIAKINLDSFEVKSGKVSGHLLNNFAMDEYNGYLRVATTIGDWRFRDKMTNNIYILDSDLNVVGKLTGLEKGERIYAVRFMGDKAYIVTYKETDPLLVIDLKNPKNPKVLGELKIPGYSTYLHPIGNNLFIGIGKDDDGKLKISLFNISDLNNPKEVDKYKLNVWWSPAFRDYHAFLWDEKYKIFFLPAYNHAYVFKVEDNKIEMVKDDEHKTNVLRALFINNYLYTFSLSEMHILDENNWQLVKKIEFENYLPYGYGFK</sequence>
<keyword id="KW-1185">Reference proteome</keyword>
<keyword id="KW-0732">Signal</keyword>
<proteinExistence type="inferred from homology"/>
<organism>
    <name type="scientific">Methanocaldococcus jannaschii (strain ATCC 43067 / DSM 2661 / JAL-1 / JCM 10045 / NBRC 100440)</name>
    <name type="common">Methanococcus jannaschii</name>
    <dbReference type="NCBI Taxonomy" id="243232"/>
    <lineage>
        <taxon>Archaea</taxon>
        <taxon>Methanobacteriati</taxon>
        <taxon>Methanobacteriota</taxon>
        <taxon>Methanomada group</taxon>
        <taxon>Methanococci</taxon>
        <taxon>Methanococcales</taxon>
        <taxon>Methanocaldococcaceae</taxon>
        <taxon>Methanocaldococcus</taxon>
    </lineage>
</organism>
<evidence type="ECO:0000255" key="1">
    <source>
        <dbReference type="PROSITE-ProRule" id="PRU00303"/>
    </source>
</evidence>
<name>Y1554_METJA</name>